<keyword id="KW-0030">Aminoacyl-tRNA synthetase</keyword>
<keyword id="KW-0067">ATP-binding</keyword>
<keyword id="KW-0963">Cytoplasm</keyword>
<keyword id="KW-0436">Ligase</keyword>
<keyword id="KW-0460">Magnesium</keyword>
<keyword id="KW-0479">Metal-binding</keyword>
<keyword id="KW-0547">Nucleotide-binding</keyword>
<keyword id="KW-0648">Protein biosynthesis</keyword>
<reference key="1">
    <citation type="journal article" date="2005" name="Nat. Biotechnol.">
        <title>Genome sequence of the chlorinated compound-respiring bacterium Dehalococcoides species strain CBDB1.</title>
        <authorList>
            <person name="Kube M."/>
            <person name="Beck A."/>
            <person name="Zinder S.H."/>
            <person name="Kuhl H."/>
            <person name="Reinhardt R."/>
            <person name="Adrian L."/>
        </authorList>
    </citation>
    <scope>NUCLEOTIDE SEQUENCE [LARGE SCALE GENOMIC DNA]</scope>
    <source>
        <strain>CBDB1</strain>
    </source>
</reference>
<name>SYK_DEHMC</name>
<sequence length="498" mass="56859">MPEEYLNAQKMEKLERIKSRGINPYPSTFHPSHTSAQAVALLVEIETQENHLKEVLKLAGRIMNRRDMGKISFMDIRDGSGKMQIFFRQNDLDEASIELLKDLDLGDFIGVEGSLMRTRTGEPSLAATKVSMLSKSLLPLPEKWHGLQDVEKRYRQRYLDLISNADARQTFLTRSRVISVIRAFMNAKGFLEVETPVLQPEAGGALARPFITHHQALNCDFYMRIALELHLKRLIVGGFDRVYEIGRIFRNEGISTRHNPEFTMMESYQAYANYKDVMDFLEEMVSSVVKEISGGYTLPFGDITLDFTPPWPRLTMRDAVKQYAGIDFFDFPTKETLAAEMTRRKLKVDPAKDWGKLVDELVGEFVEPHLVQPTFLTDHPVAMSPLAKQKPEDPRLTERFEAICANMEIANAFSELNDPVEQRARFKEQLEKRSQLRTDESESVDEDFLAALAYGMPPTGGLGVGIDRLVMLFTNHDSIREVILFPALKDREDTKTQE</sequence>
<gene>
    <name evidence="1" type="primary">lysS</name>
    <name type="ordered locus">cbdbA555</name>
</gene>
<feature type="chain" id="PRO_1000071869" description="Lysine--tRNA ligase">
    <location>
        <begin position="1"/>
        <end position="498"/>
    </location>
</feature>
<feature type="binding site" evidence="1">
    <location>
        <position position="401"/>
    </location>
    <ligand>
        <name>Mg(2+)</name>
        <dbReference type="ChEBI" id="CHEBI:18420"/>
        <label>1</label>
    </ligand>
</feature>
<feature type="binding site" evidence="1">
    <location>
        <position position="408"/>
    </location>
    <ligand>
        <name>Mg(2+)</name>
        <dbReference type="ChEBI" id="CHEBI:18420"/>
        <label>1</label>
    </ligand>
</feature>
<feature type="binding site" evidence="1">
    <location>
        <position position="408"/>
    </location>
    <ligand>
        <name>Mg(2+)</name>
        <dbReference type="ChEBI" id="CHEBI:18420"/>
        <label>2</label>
    </ligand>
</feature>
<comment type="catalytic activity">
    <reaction evidence="1">
        <text>tRNA(Lys) + L-lysine + ATP = L-lysyl-tRNA(Lys) + AMP + diphosphate</text>
        <dbReference type="Rhea" id="RHEA:20792"/>
        <dbReference type="Rhea" id="RHEA-COMP:9696"/>
        <dbReference type="Rhea" id="RHEA-COMP:9697"/>
        <dbReference type="ChEBI" id="CHEBI:30616"/>
        <dbReference type="ChEBI" id="CHEBI:32551"/>
        <dbReference type="ChEBI" id="CHEBI:33019"/>
        <dbReference type="ChEBI" id="CHEBI:78442"/>
        <dbReference type="ChEBI" id="CHEBI:78529"/>
        <dbReference type="ChEBI" id="CHEBI:456215"/>
        <dbReference type="EC" id="6.1.1.6"/>
    </reaction>
</comment>
<comment type="cofactor">
    <cofactor evidence="1">
        <name>Mg(2+)</name>
        <dbReference type="ChEBI" id="CHEBI:18420"/>
    </cofactor>
    <text evidence="1">Binds 3 Mg(2+) ions per subunit.</text>
</comment>
<comment type="subunit">
    <text evidence="1">Homodimer.</text>
</comment>
<comment type="subcellular location">
    <subcellularLocation>
        <location evidence="1">Cytoplasm</location>
    </subcellularLocation>
</comment>
<comment type="similarity">
    <text evidence="1">Belongs to the class-II aminoacyl-tRNA synthetase family.</text>
</comment>
<organism>
    <name type="scientific">Dehalococcoides mccartyi (strain CBDB1)</name>
    <dbReference type="NCBI Taxonomy" id="255470"/>
    <lineage>
        <taxon>Bacteria</taxon>
        <taxon>Bacillati</taxon>
        <taxon>Chloroflexota</taxon>
        <taxon>Dehalococcoidia</taxon>
        <taxon>Dehalococcoidales</taxon>
        <taxon>Dehalococcoidaceae</taxon>
        <taxon>Dehalococcoides</taxon>
    </lineage>
</organism>
<proteinExistence type="inferred from homology"/>
<accession>Q3ZWX9</accession>
<protein>
    <recommendedName>
        <fullName evidence="1">Lysine--tRNA ligase</fullName>
        <ecNumber evidence="1">6.1.1.6</ecNumber>
    </recommendedName>
    <alternativeName>
        <fullName evidence="1">Lysyl-tRNA synthetase</fullName>
        <shortName evidence="1">LysRS</shortName>
    </alternativeName>
</protein>
<dbReference type="EC" id="6.1.1.6" evidence="1"/>
<dbReference type="EMBL" id="AJ965256">
    <property type="protein sequence ID" value="CAI82739.1"/>
    <property type="molecule type" value="Genomic_DNA"/>
</dbReference>
<dbReference type="RefSeq" id="WP_011309090.1">
    <property type="nucleotide sequence ID" value="NC_007356.1"/>
</dbReference>
<dbReference type="SMR" id="Q3ZWX9"/>
<dbReference type="KEGG" id="deh:cbdbA555"/>
<dbReference type="HOGENOM" id="CLU_008255_6_0_0"/>
<dbReference type="Proteomes" id="UP000000433">
    <property type="component" value="Chromosome"/>
</dbReference>
<dbReference type="GO" id="GO:0005829">
    <property type="term" value="C:cytosol"/>
    <property type="evidence" value="ECO:0007669"/>
    <property type="project" value="TreeGrafter"/>
</dbReference>
<dbReference type="GO" id="GO:0005524">
    <property type="term" value="F:ATP binding"/>
    <property type="evidence" value="ECO:0007669"/>
    <property type="project" value="UniProtKB-UniRule"/>
</dbReference>
<dbReference type="GO" id="GO:0004824">
    <property type="term" value="F:lysine-tRNA ligase activity"/>
    <property type="evidence" value="ECO:0007669"/>
    <property type="project" value="UniProtKB-UniRule"/>
</dbReference>
<dbReference type="GO" id="GO:0000287">
    <property type="term" value="F:magnesium ion binding"/>
    <property type="evidence" value="ECO:0007669"/>
    <property type="project" value="UniProtKB-UniRule"/>
</dbReference>
<dbReference type="GO" id="GO:0000049">
    <property type="term" value="F:tRNA binding"/>
    <property type="evidence" value="ECO:0007669"/>
    <property type="project" value="TreeGrafter"/>
</dbReference>
<dbReference type="GO" id="GO:0006430">
    <property type="term" value="P:lysyl-tRNA aminoacylation"/>
    <property type="evidence" value="ECO:0007669"/>
    <property type="project" value="UniProtKB-UniRule"/>
</dbReference>
<dbReference type="CDD" id="cd00775">
    <property type="entry name" value="LysRS_core"/>
    <property type="match status" value="1"/>
</dbReference>
<dbReference type="CDD" id="cd04322">
    <property type="entry name" value="LysRS_N"/>
    <property type="match status" value="1"/>
</dbReference>
<dbReference type="FunFam" id="2.40.50.140:FF:000024">
    <property type="entry name" value="Lysine--tRNA ligase"/>
    <property type="match status" value="1"/>
</dbReference>
<dbReference type="Gene3D" id="3.30.930.10">
    <property type="entry name" value="Bira Bifunctional Protein, Domain 2"/>
    <property type="match status" value="1"/>
</dbReference>
<dbReference type="Gene3D" id="2.40.50.140">
    <property type="entry name" value="Nucleic acid-binding proteins"/>
    <property type="match status" value="1"/>
</dbReference>
<dbReference type="HAMAP" id="MF_00252">
    <property type="entry name" value="Lys_tRNA_synth_class2"/>
    <property type="match status" value="1"/>
</dbReference>
<dbReference type="InterPro" id="IPR004364">
    <property type="entry name" value="Aa-tRNA-synt_II"/>
</dbReference>
<dbReference type="InterPro" id="IPR006195">
    <property type="entry name" value="aa-tRNA-synth_II"/>
</dbReference>
<dbReference type="InterPro" id="IPR045864">
    <property type="entry name" value="aa-tRNA-synth_II/BPL/LPL"/>
</dbReference>
<dbReference type="InterPro" id="IPR002313">
    <property type="entry name" value="Lys-tRNA-ligase_II"/>
</dbReference>
<dbReference type="InterPro" id="IPR044136">
    <property type="entry name" value="Lys-tRNA-ligase_II_N"/>
</dbReference>
<dbReference type="InterPro" id="IPR018149">
    <property type="entry name" value="Lys-tRNA-synth_II_C"/>
</dbReference>
<dbReference type="InterPro" id="IPR012340">
    <property type="entry name" value="NA-bd_OB-fold"/>
</dbReference>
<dbReference type="InterPro" id="IPR004365">
    <property type="entry name" value="NA-bd_OB_tRNA"/>
</dbReference>
<dbReference type="NCBIfam" id="TIGR00499">
    <property type="entry name" value="lysS_bact"/>
    <property type="match status" value="1"/>
</dbReference>
<dbReference type="NCBIfam" id="NF001756">
    <property type="entry name" value="PRK00484.1"/>
    <property type="match status" value="1"/>
</dbReference>
<dbReference type="PANTHER" id="PTHR42918:SF15">
    <property type="entry name" value="LYSINE--TRNA LIGASE, CHLOROPLASTIC_MITOCHONDRIAL"/>
    <property type="match status" value="1"/>
</dbReference>
<dbReference type="PANTHER" id="PTHR42918">
    <property type="entry name" value="LYSYL-TRNA SYNTHETASE"/>
    <property type="match status" value="1"/>
</dbReference>
<dbReference type="Pfam" id="PF00152">
    <property type="entry name" value="tRNA-synt_2"/>
    <property type="match status" value="1"/>
</dbReference>
<dbReference type="Pfam" id="PF01336">
    <property type="entry name" value="tRNA_anti-codon"/>
    <property type="match status" value="1"/>
</dbReference>
<dbReference type="PRINTS" id="PR00982">
    <property type="entry name" value="TRNASYNTHLYS"/>
</dbReference>
<dbReference type="SUPFAM" id="SSF55681">
    <property type="entry name" value="Class II aaRS and biotin synthetases"/>
    <property type="match status" value="1"/>
</dbReference>
<dbReference type="SUPFAM" id="SSF50249">
    <property type="entry name" value="Nucleic acid-binding proteins"/>
    <property type="match status" value="1"/>
</dbReference>
<dbReference type="PROSITE" id="PS50862">
    <property type="entry name" value="AA_TRNA_LIGASE_II"/>
    <property type="match status" value="1"/>
</dbReference>
<evidence type="ECO:0000255" key="1">
    <source>
        <dbReference type="HAMAP-Rule" id="MF_00252"/>
    </source>
</evidence>